<feature type="chain" id="PRO_0000297394" description="3-methyl-2-oxobutanoate hydroxymethyltransferase">
    <location>
        <begin position="1"/>
        <end position="267"/>
    </location>
</feature>
<feature type="active site" description="Proton acceptor" evidence="1">
    <location>
        <position position="185"/>
    </location>
</feature>
<feature type="binding site" evidence="1">
    <location>
        <begin position="42"/>
        <end position="43"/>
    </location>
    <ligand>
        <name>3-methyl-2-oxobutanoate</name>
        <dbReference type="ChEBI" id="CHEBI:11851"/>
    </ligand>
</feature>
<feature type="binding site" evidence="1">
    <location>
        <position position="42"/>
    </location>
    <ligand>
        <name>Mg(2+)</name>
        <dbReference type="ChEBI" id="CHEBI:18420"/>
    </ligand>
</feature>
<feature type="binding site" evidence="1">
    <location>
        <position position="86"/>
    </location>
    <ligand>
        <name>3-methyl-2-oxobutanoate</name>
        <dbReference type="ChEBI" id="CHEBI:11851"/>
    </ligand>
</feature>
<feature type="binding site" evidence="1">
    <location>
        <position position="86"/>
    </location>
    <ligand>
        <name>Mg(2+)</name>
        <dbReference type="ChEBI" id="CHEBI:18420"/>
    </ligand>
</feature>
<feature type="binding site" evidence="1">
    <location>
        <position position="116"/>
    </location>
    <ligand>
        <name>3-methyl-2-oxobutanoate</name>
        <dbReference type="ChEBI" id="CHEBI:11851"/>
    </ligand>
</feature>
<feature type="binding site" evidence="1">
    <location>
        <position position="118"/>
    </location>
    <ligand>
        <name>Mg(2+)</name>
        <dbReference type="ChEBI" id="CHEBI:18420"/>
    </ligand>
</feature>
<sequence>MRPADLIRQKQNGRTITILTAWDSLSAALVEAAGADAVLVGDSLAMVALGHATTLPVTLDQMRHHTLAVSRGFAAAPSKQPLLICDLPFLSYQCGADLAVQAAGTLLKETPAAAVKLEGAEAEVLAVIDRLVRMGIPVMGHLGLTPQAVHRLGYRRQAEDPVSQERLLTQAIALEQAGCFALVLEHVPSALAREVRRRLLIPVIGIGAGDDCDGQIRVTADLLGLTEQQPPFSPALIPGQQLFVEALRTWIAAQTPTTTPPPATPDY</sequence>
<keyword id="KW-0963">Cytoplasm</keyword>
<keyword id="KW-0460">Magnesium</keyword>
<keyword id="KW-0479">Metal-binding</keyword>
<keyword id="KW-0566">Pantothenate biosynthesis</keyword>
<keyword id="KW-0808">Transferase</keyword>
<name>PANB_PARMW</name>
<comment type="function">
    <text evidence="1">Catalyzes the reversible reaction in which hydroxymethyl group from 5,10-methylenetetrahydrofolate is transferred onto alpha-ketoisovalerate to form ketopantoate.</text>
</comment>
<comment type="catalytic activity">
    <reaction evidence="1">
        <text>3-methyl-2-oxobutanoate + (6R)-5,10-methylene-5,6,7,8-tetrahydrofolate + H2O = 2-dehydropantoate + (6S)-5,6,7,8-tetrahydrofolate</text>
        <dbReference type="Rhea" id="RHEA:11824"/>
        <dbReference type="ChEBI" id="CHEBI:11561"/>
        <dbReference type="ChEBI" id="CHEBI:11851"/>
        <dbReference type="ChEBI" id="CHEBI:15377"/>
        <dbReference type="ChEBI" id="CHEBI:15636"/>
        <dbReference type="ChEBI" id="CHEBI:57453"/>
        <dbReference type="EC" id="2.1.2.11"/>
    </reaction>
</comment>
<comment type="cofactor">
    <cofactor evidence="1">
        <name>Mg(2+)</name>
        <dbReference type="ChEBI" id="CHEBI:18420"/>
    </cofactor>
    <text evidence="1">Binds 1 Mg(2+) ion per subunit.</text>
</comment>
<comment type="pathway">
    <text evidence="1">Cofactor biosynthesis; (R)-pantothenate biosynthesis; (R)-pantoate from 3-methyl-2-oxobutanoate: step 1/2.</text>
</comment>
<comment type="subunit">
    <text evidence="1">Homodecamer; pentamer of dimers.</text>
</comment>
<comment type="subcellular location">
    <subcellularLocation>
        <location evidence="1">Cytoplasm</location>
    </subcellularLocation>
</comment>
<comment type="similarity">
    <text evidence="1">Belongs to the PanB family.</text>
</comment>
<gene>
    <name evidence="1" type="primary">panB</name>
    <name type="ordered locus">SYNW1645</name>
</gene>
<evidence type="ECO:0000255" key="1">
    <source>
        <dbReference type="HAMAP-Rule" id="MF_00156"/>
    </source>
</evidence>
<dbReference type="EC" id="2.1.2.11" evidence="1"/>
<dbReference type="EMBL" id="BX569693">
    <property type="protein sequence ID" value="CAE08160.1"/>
    <property type="molecule type" value="Genomic_DNA"/>
</dbReference>
<dbReference type="RefSeq" id="WP_011128509.1">
    <property type="nucleotide sequence ID" value="NC_005070.1"/>
</dbReference>
<dbReference type="SMR" id="Q7TTU0"/>
<dbReference type="STRING" id="84588.SYNW1645"/>
<dbReference type="KEGG" id="syw:SYNW1645"/>
<dbReference type="eggNOG" id="COG0413">
    <property type="taxonomic scope" value="Bacteria"/>
</dbReference>
<dbReference type="HOGENOM" id="CLU_036645_1_0_3"/>
<dbReference type="UniPathway" id="UPA00028">
    <property type="reaction ID" value="UER00003"/>
</dbReference>
<dbReference type="Proteomes" id="UP000001422">
    <property type="component" value="Chromosome"/>
</dbReference>
<dbReference type="GO" id="GO:0005737">
    <property type="term" value="C:cytoplasm"/>
    <property type="evidence" value="ECO:0007669"/>
    <property type="project" value="UniProtKB-SubCell"/>
</dbReference>
<dbReference type="GO" id="GO:0003864">
    <property type="term" value="F:3-methyl-2-oxobutanoate hydroxymethyltransferase activity"/>
    <property type="evidence" value="ECO:0007669"/>
    <property type="project" value="UniProtKB-UniRule"/>
</dbReference>
<dbReference type="GO" id="GO:0000287">
    <property type="term" value="F:magnesium ion binding"/>
    <property type="evidence" value="ECO:0007669"/>
    <property type="project" value="TreeGrafter"/>
</dbReference>
<dbReference type="GO" id="GO:0015940">
    <property type="term" value="P:pantothenate biosynthetic process"/>
    <property type="evidence" value="ECO:0007669"/>
    <property type="project" value="UniProtKB-UniRule"/>
</dbReference>
<dbReference type="CDD" id="cd06557">
    <property type="entry name" value="KPHMT-like"/>
    <property type="match status" value="1"/>
</dbReference>
<dbReference type="Gene3D" id="3.20.20.60">
    <property type="entry name" value="Phosphoenolpyruvate-binding domains"/>
    <property type="match status" value="1"/>
</dbReference>
<dbReference type="HAMAP" id="MF_00156">
    <property type="entry name" value="PanB"/>
    <property type="match status" value="1"/>
</dbReference>
<dbReference type="InterPro" id="IPR003700">
    <property type="entry name" value="Pantoate_hydroxy_MeTrfase"/>
</dbReference>
<dbReference type="InterPro" id="IPR015813">
    <property type="entry name" value="Pyrv/PenolPyrv_kinase-like_dom"/>
</dbReference>
<dbReference type="InterPro" id="IPR040442">
    <property type="entry name" value="Pyrv_kinase-like_dom_sf"/>
</dbReference>
<dbReference type="NCBIfam" id="TIGR00222">
    <property type="entry name" value="panB"/>
    <property type="match status" value="1"/>
</dbReference>
<dbReference type="NCBIfam" id="NF001452">
    <property type="entry name" value="PRK00311.1"/>
    <property type="match status" value="1"/>
</dbReference>
<dbReference type="PANTHER" id="PTHR20881">
    <property type="entry name" value="3-METHYL-2-OXOBUTANOATE HYDROXYMETHYLTRANSFERASE"/>
    <property type="match status" value="1"/>
</dbReference>
<dbReference type="PANTHER" id="PTHR20881:SF0">
    <property type="entry name" value="3-METHYL-2-OXOBUTANOATE HYDROXYMETHYLTRANSFERASE"/>
    <property type="match status" value="1"/>
</dbReference>
<dbReference type="Pfam" id="PF02548">
    <property type="entry name" value="Pantoate_transf"/>
    <property type="match status" value="1"/>
</dbReference>
<dbReference type="PIRSF" id="PIRSF000388">
    <property type="entry name" value="Pantoate_hydroxy_MeTrfase"/>
    <property type="match status" value="1"/>
</dbReference>
<dbReference type="SUPFAM" id="SSF51621">
    <property type="entry name" value="Phosphoenolpyruvate/pyruvate domain"/>
    <property type="match status" value="1"/>
</dbReference>
<organism>
    <name type="scientific">Parasynechococcus marenigrum (strain WH8102)</name>
    <dbReference type="NCBI Taxonomy" id="84588"/>
    <lineage>
        <taxon>Bacteria</taxon>
        <taxon>Bacillati</taxon>
        <taxon>Cyanobacteriota</taxon>
        <taxon>Cyanophyceae</taxon>
        <taxon>Synechococcales</taxon>
        <taxon>Prochlorococcaceae</taxon>
        <taxon>Parasynechococcus</taxon>
        <taxon>Parasynechococcus marenigrum</taxon>
    </lineage>
</organism>
<proteinExistence type="inferred from homology"/>
<protein>
    <recommendedName>
        <fullName evidence="1">3-methyl-2-oxobutanoate hydroxymethyltransferase</fullName>
        <ecNumber evidence="1">2.1.2.11</ecNumber>
    </recommendedName>
    <alternativeName>
        <fullName evidence="1">Ketopantoate hydroxymethyltransferase</fullName>
        <shortName evidence="1">KPHMT</shortName>
    </alternativeName>
</protein>
<accession>Q7TTU0</accession>
<reference key="1">
    <citation type="journal article" date="2003" name="Nature">
        <title>The genome of a motile marine Synechococcus.</title>
        <authorList>
            <person name="Palenik B."/>
            <person name="Brahamsha B."/>
            <person name="Larimer F.W."/>
            <person name="Land M.L."/>
            <person name="Hauser L."/>
            <person name="Chain P."/>
            <person name="Lamerdin J.E."/>
            <person name="Regala W."/>
            <person name="Allen E.E."/>
            <person name="McCarren J."/>
            <person name="Paulsen I.T."/>
            <person name="Dufresne A."/>
            <person name="Partensky F."/>
            <person name="Webb E.A."/>
            <person name="Waterbury J."/>
        </authorList>
    </citation>
    <scope>NUCLEOTIDE SEQUENCE [LARGE SCALE GENOMIC DNA]</scope>
    <source>
        <strain>WH8102</strain>
    </source>
</reference>